<accession>Q9H2S1</accession>
<accession>A6NF94</accession>
<accession>Q0VFZ4</accession>
<accession>Q6PJI0</accession>
<accession>Q6X2Y2</accession>
<feature type="chain" id="PRO_0000155010" description="Small conductance calcium-activated potassium channel protein 2">
    <location>
        <begin position="1"/>
        <end position="579"/>
    </location>
</feature>
<feature type="transmembrane region" description="Helical; Name=Segment S1" evidence="4">
    <location>
        <begin position="138"/>
        <end position="158"/>
    </location>
</feature>
<feature type="transmembrane region" description="Helical; Name=Segment S2" evidence="4">
    <location>
        <begin position="168"/>
        <end position="188"/>
    </location>
</feature>
<feature type="transmembrane region" description="Helical; Name=Segment S3" evidence="4">
    <location>
        <begin position="214"/>
        <end position="234"/>
    </location>
</feature>
<feature type="transmembrane region" description="Helical; Name=Segment S4" evidence="4">
    <location>
        <begin position="256"/>
        <end position="276"/>
    </location>
</feature>
<feature type="transmembrane region" description="Helical; Name=Segment S5" evidence="4">
    <location>
        <begin position="305"/>
        <end position="325"/>
    </location>
</feature>
<feature type="intramembrane region" description="Pore-forming; Name=Segment H5" evidence="4">
    <location>
        <begin position="345"/>
        <end position="365"/>
    </location>
</feature>
<feature type="transmembrane region" description="Helical; Name=Segment S6" evidence="4">
    <location>
        <begin position="374"/>
        <end position="394"/>
    </location>
</feature>
<feature type="region of interest" description="Disordered" evidence="5">
    <location>
        <begin position="1"/>
        <end position="54"/>
    </location>
</feature>
<feature type="region of interest" description="Disordered" evidence="5">
    <location>
        <begin position="90"/>
        <end position="115"/>
    </location>
</feature>
<feature type="region of interest" description="Calmodulin-binding" evidence="1">
    <location>
        <begin position="412"/>
        <end position="488"/>
    </location>
</feature>
<feature type="region of interest" description="Disordered" evidence="5">
    <location>
        <begin position="551"/>
        <end position="579"/>
    </location>
</feature>
<feature type="compositionally biased region" description="Gly residues" evidence="5">
    <location>
        <begin position="90"/>
        <end position="103"/>
    </location>
</feature>
<feature type="compositionally biased region" description="Low complexity" evidence="5">
    <location>
        <begin position="568"/>
        <end position="579"/>
    </location>
</feature>
<feature type="modified residue" description="Phosphotyrosine" evidence="3">
    <location>
        <position position="160"/>
    </location>
</feature>
<feature type="splice variant" id="VSP_044584" description="In isoform 2." evidence="12">
    <location>
        <begin position="1"/>
        <end position="348"/>
    </location>
</feature>
<feature type="sequence variant" id="VAR_086742" description="In NEDMAB; uncertain significance; no effect on channel function." evidence="10">
    <original>E</original>
    <variation>Q</variation>
    <location>
        <position position="30"/>
    </location>
</feature>
<feature type="sequence variant" id="VAR_086743" description="In NEDMAB." evidence="10">
    <location>
        <begin position="160"/>
        <end position="579"/>
    </location>
</feature>
<feature type="sequence variant" id="VAR_086744" description="In NEDMAB; requires 2 nucleotide substitutions." evidence="10">
    <original>I</original>
    <variation>S</variation>
    <location>
        <position position="288"/>
    </location>
</feature>
<feature type="sequence variant" id="VAR_086745" description="In NEDMAB; loss of function of homomeric channels." evidence="10">
    <location>
        <position position="321"/>
    </location>
</feature>
<feature type="sequence variant" id="VAR_086746" description="In NEDMAB; loss of function of homomeric channels." evidence="10">
    <original>I</original>
    <variation>M</variation>
    <location>
        <position position="359"/>
    </location>
</feature>
<feature type="sequence variant" id="VAR_086747" description="In NEDMAB." evidence="10">
    <original>Y</original>
    <variation>C</variation>
    <location>
        <position position="361"/>
    </location>
</feature>
<feature type="sequence variant" id="VAR_086748" description="In NEDMAB; loss of function of homomeric channels." evidence="10">
    <original>G</original>
    <variation>S</variation>
    <location>
        <position position="362"/>
    </location>
</feature>
<feature type="sequence variant" id="VAR_086749" description="In DYT34; uncertain significance." evidence="9">
    <original>G</original>
    <variation>E</variation>
    <location>
        <position position="371"/>
    </location>
</feature>
<feature type="sequence variant" id="VAR_086750" description="In NEDMAB; loss of function of homomeric channels." evidence="10">
    <original>L</original>
    <variation>V</variation>
    <location>
        <position position="388"/>
    </location>
</feature>
<feature type="sequence variant" id="VAR_086751" description="In NEDMAB; loss of function of homomeric channels." evidence="10">
    <original>L</original>
    <variation>P</variation>
    <location>
        <position position="432"/>
    </location>
</feature>
<feature type="sequence conflict" description="In Ref. 3; AAK84039." evidence="13" ref="3">
    <original>S</original>
    <variation>SA</variation>
    <location>
        <position position="50"/>
    </location>
</feature>
<feature type="sequence conflict" description="In Ref. 1; AAG16728." evidence="13" ref="1">
    <original>A</original>
    <variation>D</variation>
    <location>
        <position position="52"/>
    </location>
</feature>
<feature type="sequence conflict" description="In Ref. 2; AAP45946." evidence="13" ref="2">
    <original>A</original>
    <variation>AA</variation>
    <location>
        <position position="58"/>
    </location>
</feature>
<feature type="sequence conflict" description="In Ref. 3; AAK84039." evidence="13" ref="3">
    <original>I</original>
    <variation>T</variation>
    <location>
        <position position="323"/>
    </location>
</feature>
<feature type="sequence conflict" description="In Ref. 2; AAP45946 and 3; AAK84039." evidence="13" ref="2 3">
    <original>Q</original>
    <variation>R</variation>
    <location>
        <position position="530"/>
    </location>
</feature>
<feature type="strand" evidence="17">
    <location>
        <begin position="405"/>
        <end position="409"/>
    </location>
</feature>
<feature type="helix" evidence="16">
    <location>
        <begin position="410"/>
        <end position="412"/>
    </location>
</feature>
<feature type="helix" evidence="15">
    <location>
        <begin position="413"/>
        <end position="438"/>
    </location>
</feature>
<feature type="strand" evidence="16">
    <location>
        <begin position="439"/>
        <end position="442"/>
    </location>
</feature>
<feature type="helix" evidence="15">
    <location>
        <begin position="445"/>
        <end position="484"/>
    </location>
</feature>
<protein>
    <recommendedName>
        <fullName evidence="13">Small conductance calcium-activated potassium channel protein 2</fullName>
        <shortName>SK2</shortName>
        <shortName>SKCa 2</shortName>
        <shortName>SKCa2</shortName>
    </recommendedName>
    <alternativeName>
        <fullName>KCa2.2</fullName>
    </alternativeName>
</protein>
<name>KCNN2_HUMAN</name>
<gene>
    <name evidence="14" type="primary">KCNN2</name>
</gene>
<reference key="1">
    <citation type="journal article" date="2000" name="J. Biol. Chem.">
        <title>Ca2+-activated K+ channels in human leukemic Jurkat T cells. Molecular cloning, biochemical and functional characterization.</title>
        <authorList>
            <person name="Desai R."/>
            <person name="Peretz A."/>
            <person name="Idelson H."/>
            <person name="Lazarovici P."/>
            <person name="Attali B."/>
        </authorList>
    </citation>
    <scope>NUCLEOTIDE SEQUENCE [MRNA] (ISOFORM 1)</scope>
    <scope>FUNCTION</scope>
    <scope>TRANSPORTER ACTIVITY</scope>
    <scope>ACTIVITY REGULATION</scope>
</reference>
<reference key="2">
    <citation type="journal article" date="2003" name="J. Biol. Chem.">
        <title>Molecular identification and functional roles of a Ca(2+)-activated K+ channel in human and mouse hearts.</title>
        <authorList>
            <person name="Xu Y."/>
            <person name="Tuteja D."/>
            <person name="Zhang Z."/>
            <person name="Xu D."/>
            <person name="Zhang Y."/>
            <person name="Rodriguez J."/>
            <person name="Nie L."/>
            <person name="Tuxson H.R."/>
            <person name="Young J.N."/>
            <person name="Glatter K.A."/>
            <person name="Vazquez A.E."/>
            <person name="Yamoah E.N."/>
            <person name="Chiamvimonvat N."/>
        </authorList>
    </citation>
    <scope>NUCLEOTIDE SEQUENCE [MRNA] (ISOFORM 1)</scope>
    <scope>FUNCTION</scope>
    <scope>TRANSPORTER ACTIVITY</scope>
    <scope>TISSUE SPECIFICITY</scope>
    <source>
        <tissue>Heart</tissue>
    </source>
</reference>
<reference key="3">
    <citation type="submission" date="2001-07" db="EMBL/GenBank/DDBJ databases">
        <title>Characterization of calcium-activated potassium channels in human myometrium.</title>
        <authorList>
            <person name="Mazzone J.N."/>
            <person name="Kaiser R.A."/>
            <person name="Buxton I.L.O."/>
        </authorList>
    </citation>
    <scope>NUCLEOTIDE SEQUENCE [MRNA] (ISOFORM 1)</scope>
    <source>
        <tissue>Myometrium</tissue>
    </source>
</reference>
<reference key="4">
    <citation type="journal article" date="2004" name="Nat. Genet.">
        <title>Complete sequencing and characterization of 21,243 full-length human cDNAs.</title>
        <authorList>
            <person name="Ota T."/>
            <person name="Suzuki Y."/>
            <person name="Nishikawa T."/>
            <person name="Otsuki T."/>
            <person name="Sugiyama T."/>
            <person name="Irie R."/>
            <person name="Wakamatsu A."/>
            <person name="Hayashi K."/>
            <person name="Sato H."/>
            <person name="Nagai K."/>
            <person name="Kimura K."/>
            <person name="Makita H."/>
            <person name="Sekine M."/>
            <person name="Obayashi M."/>
            <person name="Nishi T."/>
            <person name="Shibahara T."/>
            <person name="Tanaka T."/>
            <person name="Ishii S."/>
            <person name="Yamamoto J."/>
            <person name="Saito K."/>
            <person name="Kawai Y."/>
            <person name="Isono Y."/>
            <person name="Nakamura Y."/>
            <person name="Nagahari K."/>
            <person name="Murakami K."/>
            <person name="Yasuda T."/>
            <person name="Iwayanagi T."/>
            <person name="Wagatsuma M."/>
            <person name="Shiratori A."/>
            <person name="Sudo H."/>
            <person name="Hosoiri T."/>
            <person name="Kaku Y."/>
            <person name="Kodaira H."/>
            <person name="Kondo H."/>
            <person name="Sugawara M."/>
            <person name="Takahashi M."/>
            <person name="Kanda K."/>
            <person name="Yokoi T."/>
            <person name="Furuya T."/>
            <person name="Kikkawa E."/>
            <person name="Omura Y."/>
            <person name="Abe K."/>
            <person name="Kamihara K."/>
            <person name="Katsuta N."/>
            <person name="Sato K."/>
            <person name="Tanikawa M."/>
            <person name="Yamazaki M."/>
            <person name="Ninomiya K."/>
            <person name="Ishibashi T."/>
            <person name="Yamashita H."/>
            <person name="Murakawa K."/>
            <person name="Fujimori K."/>
            <person name="Tanai H."/>
            <person name="Kimata M."/>
            <person name="Watanabe M."/>
            <person name="Hiraoka S."/>
            <person name="Chiba Y."/>
            <person name="Ishida S."/>
            <person name="Ono Y."/>
            <person name="Takiguchi S."/>
            <person name="Watanabe S."/>
            <person name="Yosida M."/>
            <person name="Hotuta T."/>
            <person name="Kusano J."/>
            <person name="Kanehori K."/>
            <person name="Takahashi-Fujii A."/>
            <person name="Hara H."/>
            <person name="Tanase T.-O."/>
            <person name="Nomura Y."/>
            <person name="Togiya S."/>
            <person name="Komai F."/>
            <person name="Hara R."/>
            <person name="Takeuchi K."/>
            <person name="Arita M."/>
            <person name="Imose N."/>
            <person name="Musashino K."/>
            <person name="Yuuki H."/>
            <person name="Oshima A."/>
            <person name="Sasaki N."/>
            <person name="Aotsuka S."/>
            <person name="Yoshikawa Y."/>
            <person name="Matsunawa H."/>
            <person name="Ichihara T."/>
            <person name="Shiohata N."/>
            <person name="Sano S."/>
            <person name="Moriya S."/>
            <person name="Momiyama H."/>
            <person name="Satoh N."/>
            <person name="Takami S."/>
            <person name="Terashima Y."/>
            <person name="Suzuki O."/>
            <person name="Nakagawa S."/>
            <person name="Senoh A."/>
            <person name="Mizoguchi H."/>
            <person name="Goto Y."/>
            <person name="Shimizu F."/>
            <person name="Wakebe H."/>
            <person name="Hishigaki H."/>
            <person name="Watanabe T."/>
            <person name="Sugiyama A."/>
            <person name="Takemoto M."/>
            <person name="Kawakami B."/>
            <person name="Yamazaki M."/>
            <person name="Watanabe K."/>
            <person name="Kumagai A."/>
            <person name="Itakura S."/>
            <person name="Fukuzumi Y."/>
            <person name="Fujimori Y."/>
            <person name="Komiyama M."/>
            <person name="Tashiro H."/>
            <person name="Tanigami A."/>
            <person name="Fujiwara T."/>
            <person name="Ono T."/>
            <person name="Yamada K."/>
            <person name="Fujii Y."/>
            <person name="Ozaki K."/>
            <person name="Hirao M."/>
            <person name="Ohmori Y."/>
            <person name="Kawabata A."/>
            <person name="Hikiji T."/>
            <person name="Kobatake N."/>
            <person name="Inagaki H."/>
            <person name="Ikema Y."/>
            <person name="Okamoto S."/>
            <person name="Okitani R."/>
            <person name="Kawakami T."/>
            <person name="Noguchi S."/>
            <person name="Itoh T."/>
            <person name="Shigeta K."/>
            <person name="Senba T."/>
            <person name="Matsumura K."/>
            <person name="Nakajima Y."/>
            <person name="Mizuno T."/>
            <person name="Morinaga M."/>
            <person name="Sasaki M."/>
            <person name="Togashi T."/>
            <person name="Oyama M."/>
            <person name="Hata H."/>
            <person name="Watanabe M."/>
            <person name="Komatsu T."/>
            <person name="Mizushima-Sugano J."/>
            <person name="Satoh T."/>
            <person name="Shirai Y."/>
            <person name="Takahashi Y."/>
            <person name="Nakagawa K."/>
            <person name="Okumura K."/>
            <person name="Nagase T."/>
            <person name="Nomura N."/>
            <person name="Kikuchi H."/>
            <person name="Masuho Y."/>
            <person name="Yamashita R."/>
            <person name="Nakai K."/>
            <person name="Yada T."/>
            <person name="Nakamura Y."/>
            <person name="Ohara O."/>
            <person name="Isogai T."/>
            <person name="Sugano S."/>
        </authorList>
    </citation>
    <scope>NUCLEOTIDE SEQUENCE [LARGE SCALE MRNA] (ISOFORM 1)</scope>
    <source>
        <tissue>Hippocampus</tissue>
    </source>
</reference>
<reference key="5">
    <citation type="journal article" date="2004" name="Nature">
        <title>The DNA sequence and comparative analysis of human chromosome 5.</title>
        <authorList>
            <person name="Schmutz J."/>
            <person name="Martin J."/>
            <person name="Terry A."/>
            <person name="Couronne O."/>
            <person name="Grimwood J."/>
            <person name="Lowry S."/>
            <person name="Gordon L.A."/>
            <person name="Scott D."/>
            <person name="Xie G."/>
            <person name="Huang W."/>
            <person name="Hellsten U."/>
            <person name="Tran-Gyamfi M."/>
            <person name="She X."/>
            <person name="Prabhakar S."/>
            <person name="Aerts A."/>
            <person name="Altherr M."/>
            <person name="Bajorek E."/>
            <person name="Black S."/>
            <person name="Branscomb E."/>
            <person name="Caoile C."/>
            <person name="Challacombe J.F."/>
            <person name="Chan Y.M."/>
            <person name="Denys M."/>
            <person name="Detter J.C."/>
            <person name="Escobar J."/>
            <person name="Flowers D."/>
            <person name="Fotopulos D."/>
            <person name="Glavina T."/>
            <person name="Gomez M."/>
            <person name="Gonzales E."/>
            <person name="Goodstein D."/>
            <person name="Grigoriev I."/>
            <person name="Groza M."/>
            <person name="Hammon N."/>
            <person name="Hawkins T."/>
            <person name="Haydu L."/>
            <person name="Israni S."/>
            <person name="Jett J."/>
            <person name="Kadner K."/>
            <person name="Kimball H."/>
            <person name="Kobayashi A."/>
            <person name="Lopez F."/>
            <person name="Lou Y."/>
            <person name="Martinez D."/>
            <person name="Medina C."/>
            <person name="Morgan J."/>
            <person name="Nandkeshwar R."/>
            <person name="Noonan J.P."/>
            <person name="Pitluck S."/>
            <person name="Pollard M."/>
            <person name="Predki P."/>
            <person name="Priest J."/>
            <person name="Ramirez L."/>
            <person name="Retterer J."/>
            <person name="Rodriguez A."/>
            <person name="Rogers S."/>
            <person name="Salamov A."/>
            <person name="Salazar A."/>
            <person name="Thayer N."/>
            <person name="Tice H."/>
            <person name="Tsai M."/>
            <person name="Ustaszewska A."/>
            <person name="Vo N."/>
            <person name="Wheeler J."/>
            <person name="Wu K."/>
            <person name="Yang J."/>
            <person name="Dickson M."/>
            <person name="Cheng J.-F."/>
            <person name="Eichler E.E."/>
            <person name="Olsen A."/>
            <person name="Pennacchio L.A."/>
            <person name="Rokhsar D.S."/>
            <person name="Richardson P."/>
            <person name="Lucas S.M."/>
            <person name="Myers R.M."/>
            <person name="Rubin E.M."/>
        </authorList>
    </citation>
    <scope>NUCLEOTIDE SEQUENCE [LARGE SCALE GENOMIC DNA]</scope>
</reference>
<reference key="6">
    <citation type="submission" date="2005-09" db="EMBL/GenBank/DDBJ databases">
        <authorList>
            <person name="Mural R.J."/>
            <person name="Istrail S."/>
            <person name="Sutton G.G."/>
            <person name="Florea L."/>
            <person name="Halpern A.L."/>
            <person name="Mobarry C.M."/>
            <person name="Lippert R."/>
            <person name="Walenz B."/>
            <person name="Shatkay H."/>
            <person name="Dew I."/>
            <person name="Miller J.R."/>
            <person name="Flanigan M.J."/>
            <person name="Edwards N.J."/>
            <person name="Bolanos R."/>
            <person name="Fasulo D."/>
            <person name="Halldorsson B.V."/>
            <person name="Hannenhalli S."/>
            <person name="Turner R."/>
            <person name="Yooseph S."/>
            <person name="Lu F."/>
            <person name="Nusskern D.R."/>
            <person name="Shue B.C."/>
            <person name="Zheng X.H."/>
            <person name="Zhong F."/>
            <person name="Delcher A.L."/>
            <person name="Huson D.H."/>
            <person name="Kravitz S.A."/>
            <person name="Mouchard L."/>
            <person name="Reinert K."/>
            <person name="Remington K.A."/>
            <person name="Clark A.G."/>
            <person name="Waterman M.S."/>
            <person name="Eichler E.E."/>
            <person name="Adams M.D."/>
            <person name="Hunkapiller M.W."/>
            <person name="Myers E.W."/>
            <person name="Venter J.C."/>
        </authorList>
    </citation>
    <scope>NUCLEOTIDE SEQUENCE [LARGE SCALE GENOMIC DNA]</scope>
</reference>
<reference key="7">
    <citation type="journal article" date="2004" name="Genome Res.">
        <title>The status, quality, and expansion of the NIH full-length cDNA project: the Mammalian Gene Collection (MGC).</title>
        <authorList>
            <consortium name="The MGC Project Team"/>
        </authorList>
    </citation>
    <scope>NUCLEOTIDE SEQUENCE [LARGE SCALE MRNA] (ISOFORMS 1 AND 2)</scope>
    <source>
        <tissue>Brain</tissue>
        <tissue>Skin</tissue>
    </source>
</reference>
<reference key="8">
    <citation type="journal article" date="1997" name="J. Biol. Chem.">
        <title>Determinants of apamin and d-tubocurarine block in SK potassium channels.</title>
        <authorList>
            <person name="Ishii T.M."/>
            <person name="Maylie J."/>
            <person name="Adelman J.P."/>
        </authorList>
    </citation>
    <scope>FUNCTION</scope>
    <scope>TRANSPORTER ACTIVITY</scope>
    <scope>ACTIVITY REGULATION</scope>
    <scope>SUBUNIT</scope>
</reference>
<reference key="9">
    <citation type="journal article" date="2010" name="Circ. Res.">
        <title>Cardiac small conductance Ca2+-activated K+ channel subunits form heteromultimers via the coiled-coil domains in the C termini of the channels.</title>
        <authorList>
            <person name="Tuteja D."/>
            <person name="Rafizadeh S."/>
            <person name="Timofeyev V."/>
            <person name="Wang S."/>
            <person name="Zhang Z."/>
            <person name="Li N."/>
            <person name="Mateo R.K."/>
            <person name="Singapuri A."/>
            <person name="Young J.N."/>
            <person name="Knowlton A.A."/>
            <person name="Chiamvimonvat N."/>
        </authorList>
    </citation>
    <scope>SUBUNIT</scope>
    <scope>DOMAIN</scope>
</reference>
<reference key="10">
    <citation type="journal article" date="2020" name="Brain">
        <title>Variants in the SK2 channel gene (KCNN2) lead to dominant neurodevelopmental movement disorders.</title>
        <authorList>
            <person name="Mochel F."/>
            <person name="Rastetter A."/>
            <person name="Ceulemans B."/>
            <person name="Platzer K."/>
            <person name="Yang S."/>
            <person name="Shinde D.N."/>
            <person name="Helbig K.L."/>
            <person name="Lopergolo D."/>
            <person name="Mari F."/>
            <person name="Renieri A."/>
            <person name="Benetti E."/>
            <person name="Canitano R."/>
            <person name="Waisfisz Q."/>
            <person name="Plomp A.S."/>
            <person name="Huisman S.A."/>
            <person name="Wilson G.N."/>
            <person name="Cathey S.S."/>
            <person name="Louie R.J."/>
            <person name="Gaudio D.D."/>
            <person name="Waggoner D."/>
            <person name="Kacker S."/>
            <person name="Nugent K.M."/>
            <person name="Roeder E.R."/>
            <person name="Bruel A.L."/>
            <person name="Thevenon J."/>
            <person name="Ehmke N."/>
            <person name="Horn D."/>
            <person name="Holtgrewe M."/>
            <person name="Kaiser F.J."/>
            <person name="Kamphausen S.B."/>
            <person name="Abou Jamra R."/>
            <person name="Weckhuysen S."/>
            <person name="Dalle C."/>
            <person name="Depienne C."/>
        </authorList>
    </citation>
    <scope>INVOLVEMENT IN NEDMAB</scope>
    <scope>VARIANTS NEDMAB GLN-30; 160-TYR--SER-579 DEL; SER-288; LEU-321 DEL; MET-359; CYS-361; SER-362; VAL-388 AND PRO-432</scope>
    <scope>CHARACTERIZATION OF VARIANTS NEDMAB GLN-30; LEU-321 DEL; MET-359; CYS-361; SER-362; VAL-388 AND PRO-432</scope>
    <scope>FUNCTION</scope>
    <scope>TRANSPORTER ACTIVITY</scope>
</reference>
<reference key="11">
    <citation type="journal article" date="2020" name="Eur. J. Neurol.">
        <title>KCNN2 mutation in autosomal-dominant tremulous myoclonus-dystonia.</title>
        <authorList>
            <person name="Balint B."/>
            <person name="Guerreiro R."/>
            <person name="Carmona S."/>
            <person name="Dehghani N."/>
            <person name="Latorre A."/>
            <person name="Cordivari C."/>
            <person name="Bhatia K.P."/>
            <person name="Bras J."/>
        </authorList>
    </citation>
    <scope>INVOLVEMENT IN DYT34</scope>
    <scope>VARIANT DYT34 GLU-371</scope>
</reference>
<comment type="function">
    <text evidence="3 6 7 10 11">Small conductance calcium-activated potassium channel that mediates the voltage-independent transmembrane transfer of potassium across the cell membrane through a constitutive interaction with calmodulin which binds the intracellular calcium allowing its opening (PubMed:10991935, PubMed:33242881, PubMed:9287325). The current is characterized by a voltage-independent activation, an intracellular calcium concentration increase-dependent activation and a single-channel conductance of about 3 picosiemens (PubMed:10991935). Also presents an inwardly rectifying current, thus reducing its already small outward conductance of potassium ions, which is particularly the case when the membrane potential displays positive values, above + 20 mV (PubMed:10991935). The inward rectification could be due to a blockade of the outward current by intracellular divalent cations such as calcium and magnesium and could also be due to an intrinsic property of the channel pore, independent of intracellular divalent ions. There are three positively charged amino acids in the S6 transmembrane domain, close to the pore, that collectively control the conductance and rectification through an electrostatic mechanism. Additionally, electrostatic contributions from these residues also play an important role in determining the intrinsic open probability of the channel in the absence of calcium, affecting the apparent calcium affinity for activation. Forms an heteromeric complex with calmodulin, which is constitutively associated in a calcium-independent manner. Channel opening is triggered when calcium binds the calmodulin resulting in a rotary movement leading to the formation of the dimeric complex to open the gate (By similarity). Plays a role in the repolarization phase of cardiac action potential (PubMed:13679367).</text>
</comment>
<comment type="catalytic activity">
    <reaction evidence="6 7 10 11">
        <text>K(+)(in) = K(+)(out)</text>
        <dbReference type="Rhea" id="RHEA:29463"/>
        <dbReference type="ChEBI" id="CHEBI:29103"/>
    </reaction>
</comment>
<comment type="activity regulation">
    <text evidence="3 6 11">Inhibited by bee venom neurotoxin apamin (PubMed:10991935, PubMed:9287325). Inhibited by UCL 1684 and tetraethylammonium (TEA) (By similarity).</text>
</comment>
<comment type="subunit">
    <text evidence="2 3 8 11">Homodimer (PubMed:20689065). Heteromultimer with KCNN1 and KCNN3 (PubMed:20689065, PubMed:9287325). The complex is composed of 4 channel subunits each of which binds to a calmodulin subunit which regulates the channel activity through calcium-binding (By similarity). Interacts (via N-terminal domain) with MPP2 (By similarity).</text>
</comment>
<comment type="interaction">
    <interactant intactId="EBI-6658875">
        <id>Q9H2S1</id>
    </interactant>
    <interactant intactId="EBI-77797">
        <id>P35609</id>
        <label>ACTN2</label>
    </interactant>
    <organismsDiffer>false</organismsDiffer>
    <experiments>3</experiments>
</comment>
<comment type="subcellular location">
    <subcellularLocation>
        <location evidence="4">Membrane</location>
        <topology evidence="4">Multi-pass membrane protein</topology>
    </subcellularLocation>
    <subcellularLocation>
        <location evidence="2">Cytoplasm</location>
        <location evidence="2">Myofibril</location>
        <location evidence="2">Sarcomere</location>
        <location evidence="2">Z line</location>
    </subcellularLocation>
</comment>
<comment type="alternative products">
    <event type="alternative splicing"/>
    <isoform>
        <id>Q9H2S1-1</id>
        <name>1</name>
        <sequence type="displayed"/>
    </isoform>
    <isoform>
        <id>Q9H2S1-2</id>
        <name>2</name>
        <sequence type="described" ref="VSP_044584"/>
    </isoform>
</comment>
<comment type="tissue specificity">
    <text evidence="7">Expressed in atrial myocytes (at protein level) (PubMed:13679367). Widely expressed.</text>
</comment>
<comment type="domain">
    <text evidence="8">The coiled-coil domaim mediates heteromeic assembly.</text>
</comment>
<comment type="domain">
    <text evidence="3">The calmodulin-binding domain (CaMBD) forms an elongated dimer with a calmodulin molecule bound at each end; each calmodulin wraps around three alpha-helices, two from one CaMBD subunit and one from the other.</text>
</comment>
<comment type="disease" evidence="9">
    <disease id="DI-06323">
        <name>Dystonia 34, myoclonic</name>
        <acronym>DYT34</acronym>
        <description>A form of dystonia, a disorder defined by the presence of sustained involuntary muscle contraction, often leading to abnormal postures. DYT34 is an autosomal dominant form characterized by childhood-onset dystonia predominantly affecting hands and neck, with a fast tremor with superimposed myoclonus and, in some individuals, subtle cerebellar signs.</description>
        <dbReference type="MIM" id="619724"/>
    </disease>
    <text>The disease may be caused by variants affecting the gene represented in this entry.</text>
</comment>
<comment type="disease" evidence="10">
    <disease id="DI-06324">
        <name>Neurodevelopmental disorder with or without variable movement or behavioral abnormalities</name>
        <acronym>NEDMAB</acronym>
        <description>An autosomal dominant disorder characterized by motor and language developmental delay, intellectual disability often associated with early-onset movement disorders comprising cerebellar ataxia and/or extrapyramidal symptoms. Other variable features include autism spectrum disorder or autistic features and epilepsy.</description>
        <dbReference type="MIM" id="619725"/>
    </disease>
    <text>The disease is caused by variants affecting the gene represented in this entry.</text>
</comment>
<comment type="similarity">
    <text evidence="13">Belongs to the potassium channel KCNN family. KCa2.2/KCNN2 subfamily.</text>
</comment>
<organism>
    <name type="scientific">Homo sapiens</name>
    <name type="common">Human</name>
    <dbReference type="NCBI Taxonomy" id="9606"/>
    <lineage>
        <taxon>Eukaryota</taxon>
        <taxon>Metazoa</taxon>
        <taxon>Chordata</taxon>
        <taxon>Craniata</taxon>
        <taxon>Vertebrata</taxon>
        <taxon>Euteleostomi</taxon>
        <taxon>Mammalia</taxon>
        <taxon>Eutheria</taxon>
        <taxon>Euarchontoglires</taxon>
        <taxon>Primates</taxon>
        <taxon>Haplorrhini</taxon>
        <taxon>Catarrhini</taxon>
        <taxon>Hominidae</taxon>
        <taxon>Homo</taxon>
    </lineage>
</organism>
<keyword id="KW-0002">3D-structure</keyword>
<keyword id="KW-0025">Alternative splicing</keyword>
<keyword id="KW-0112">Calmodulin-binding</keyword>
<keyword id="KW-0963">Cytoplasm</keyword>
<keyword id="KW-0225">Disease variant</keyword>
<keyword id="KW-1023">Dystonia</keyword>
<keyword id="KW-0991">Intellectual disability</keyword>
<keyword id="KW-0407">Ion channel</keyword>
<keyword id="KW-0406">Ion transport</keyword>
<keyword id="KW-0472">Membrane</keyword>
<keyword id="KW-0597">Phosphoprotein</keyword>
<keyword id="KW-1267">Proteomics identification</keyword>
<keyword id="KW-1185">Reference proteome</keyword>
<keyword id="KW-0812">Transmembrane</keyword>
<keyword id="KW-1133">Transmembrane helix</keyword>
<keyword id="KW-0813">Transport</keyword>
<dbReference type="EMBL" id="AF239613">
    <property type="protein sequence ID" value="AAG16728.1"/>
    <property type="molecule type" value="mRNA"/>
</dbReference>
<dbReference type="EMBL" id="AY258141">
    <property type="protein sequence ID" value="AAP45946.1"/>
    <property type="molecule type" value="mRNA"/>
</dbReference>
<dbReference type="EMBL" id="AF397175">
    <property type="protein sequence ID" value="AAK84039.1"/>
    <property type="molecule type" value="mRNA"/>
</dbReference>
<dbReference type="EMBL" id="AK289948">
    <property type="protein sequence ID" value="BAF82637.1"/>
    <property type="molecule type" value="mRNA"/>
</dbReference>
<dbReference type="EMBL" id="AC025761">
    <property type="status" value="NOT_ANNOTATED_CDS"/>
    <property type="molecule type" value="Genomic_DNA"/>
</dbReference>
<dbReference type="EMBL" id="AC109482">
    <property type="status" value="NOT_ANNOTATED_CDS"/>
    <property type="molecule type" value="Genomic_DNA"/>
</dbReference>
<dbReference type="EMBL" id="CH471086">
    <property type="protein sequence ID" value="EAW48975.1"/>
    <property type="molecule type" value="Genomic_DNA"/>
</dbReference>
<dbReference type="EMBL" id="CH471086">
    <property type="protein sequence ID" value="EAW48976.1"/>
    <property type="molecule type" value="Genomic_DNA"/>
</dbReference>
<dbReference type="EMBL" id="BC015371">
    <property type="protein sequence ID" value="AAH15371.1"/>
    <property type="molecule type" value="mRNA"/>
</dbReference>
<dbReference type="EMBL" id="BC117454">
    <property type="protein sequence ID" value="AAI17455.1"/>
    <property type="molecule type" value="mRNA"/>
</dbReference>
<dbReference type="EMBL" id="BC117456">
    <property type="protein sequence ID" value="AAI17457.1"/>
    <property type="molecule type" value="mRNA"/>
</dbReference>
<dbReference type="CCDS" id="CCDS43352.1">
    <molecule id="Q9H2S1-2"/>
</dbReference>
<dbReference type="RefSeq" id="NP_001265133.1">
    <property type="nucleotide sequence ID" value="NM_001278204.1"/>
</dbReference>
<dbReference type="RefSeq" id="NP_067627.2">
    <property type="nucleotide sequence ID" value="NM_021614.3"/>
</dbReference>
<dbReference type="RefSeq" id="NP_740721.1">
    <molecule id="Q9H2S1-2"/>
    <property type="nucleotide sequence ID" value="NM_170775.3"/>
</dbReference>
<dbReference type="PDB" id="5V02">
    <property type="method" value="X-ray"/>
    <property type="resolution" value="1.78 A"/>
    <property type="chains" value="B=395-486"/>
</dbReference>
<dbReference type="PDB" id="5WBX">
    <property type="method" value="X-ray"/>
    <property type="resolution" value="1.90 A"/>
    <property type="chains" value="B=395-486"/>
</dbReference>
<dbReference type="PDB" id="5WC5">
    <property type="method" value="X-ray"/>
    <property type="resolution" value="2.30 A"/>
    <property type="chains" value="B=395-486"/>
</dbReference>
<dbReference type="PDB" id="6ALE">
    <property type="method" value="X-ray"/>
    <property type="resolution" value="2.50 A"/>
    <property type="chains" value="B=394-486"/>
</dbReference>
<dbReference type="PDBsum" id="5V02"/>
<dbReference type="PDBsum" id="5WBX"/>
<dbReference type="PDBsum" id="5WC5"/>
<dbReference type="PDBsum" id="6ALE"/>
<dbReference type="BMRB" id="Q9H2S1"/>
<dbReference type="SMR" id="Q9H2S1"/>
<dbReference type="BioGRID" id="109982">
    <property type="interactions" value="7"/>
</dbReference>
<dbReference type="DIP" id="DIP-48997N"/>
<dbReference type="FunCoup" id="Q9H2S1">
    <property type="interactions" value="464"/>
</dbReference>
<dbReference type="IntAct" id="Q9H2S1">
    <property type="interactions" value="4"/>
</dbReference>
<dbReference type="STRING" id="9606.ENSP00000264773"/>
<dbReference type="BindingDB" id="Q9H2S1"/>
<dbReference type="ChEMBL" id="CHEMBL4469"/>
<dbReference type="DrugBank" id="DB02587">
    <property type="generic name" value="Colforsin"/>
</dbReference>
<dbReference type="DrugBank" id="DB04209">
    <property type="generic name" value="Dequalinium"/>
</dbReference>
<dbReference type="DrugBank" id="DB01110">
    <property type="generic name" value="Miconazole"/>
</dbReference>
<dbReference type="DrugBank" id="DB01054">
    <property type="generic name" value="Nitrendipine"/>
</dbReference>
<dbReference type="DrugBank" id="DB00721">
    <property type="generic name" value="Procaine"/>
</dbReference>
<dbReference type="DrugBank" id="DB16733">
    <property type="generic name" value="Rimtuzalcap"/>
</dbReference>
<dbReference type="DrugBank" id="DB00867">
    <property type="generic name" value="Ritodrine"/>
</dbReference>
<dbReference type="DrugBank" id="DB08837">
    <property type="generic name" value="Tetraethylammonium"/>
</dbReference>
<dbReference type="DrugBank" id="DB09089">
    <property type="generic name" value="Trimebutine"/>
</dbReference>
<dbReference type="DrugBank" id="DB19372">
    <property type="generic name" value="Zoxazolamine"/>
</dbReference>
<dbReference type="DrugCentral" id="Q9H2S1"/>
<dbReference type="GuidetoPHARMACOLOGY" id="382"/>
<dbReference type="TCDB" id="1.A.1.16.1">
    <property type="family name" value="the voltage-gated ion channel (vic) superfamily"/>
</dbReference>
<dbReference type="iPTMnet" id="Q9H2S1"/>
<dbReference type="PhosphoSitePlus" id="Q9H2S1"/>
<dbReference type="SwissPalm" id="Q9H2S1"/>
<dbReference type="BioMuta" id="KCNN2"/>
<dbReference type="DMDM" id="209572638"/>
<dbReference type="jPOST" id="Q9H2S1"/>
<dbReference type="MassIVE" id="Q9H2S1"/>
<dbReference type="PaxDb" id="9606-ENSP00000427120"/>
<dbReference type="PeptideAtlas" id="Q9H2S1"/>
<dbReference type="ProteomicsDB" id="67208"/>
<dbReference type="ProteomicsDB" id="80583">
    <molecule id="Q9H2S1-1"/>
</dbReference>
<dbReference type="ABCD" id="Q9H2S1">
    <property type="antibodies" value="1 sequenced antibody"/>
</dbReference>
<dbReference type="Antibodypedia" id="13591">
    <property type="antibodies" value="129 antibodies from 30 providers"/>
</dbReference>
<dbReference type="DNASU" id="3781"/>
<dbReference type="Ensembl" id="ENST00000503706.5">
    <molecule id="Q9H2S1-2"/>
    <property type="protein sequence ID" value="ENSP00000421439.1"/>
    <property type="gene ID" value="ENSG00000080709.17"/>
</dbReference>
<dbReference type="GeneID" id="3781"/>
<dbReference type="KEGG" id="hsa:3781"/>
<dbReference type="UCSC" id="uc003kqo.4">
    <molecule id="Q9H2S1-1"/>
    <property type="organism name" value="human"/>
</dbReference>
<dbReference type="AGR" id="HGNC:6291"/>
<dbReference type="CTD" id="3781"/>
<dbReference type="DisGeNET" id="3781"/>
<dbReference type="GeneCards" id="KCNN2"/>
<dbReference type="HGNC" id="HGNC:6291">
    <property type="gene designation" value="KCNN2"/>
</dbReference>
<dbReference type="HPA" id="ENSG00000080709">
    <property type="expression patterns" value="Tissue enhanced (adrenal gland, liver)"/>
</dbReference>
<dbReference type="MalaCards" id="KCNN2"/>
<dbReference type="MIM" id="605879">
    <property type="type" value="gene"/>
</dbReference>
<dbReference type="MIM" id="619724">
    <property type="type" value="phenotype"/>
</dbReference>
<dbReference type="MIM" id="619725">
    <property type="type" value="phenotype"/>
</dbReference>
<dbReference type="neXtProt" id="NX_Q9H2S1"/>
<dbReference type="OpenTargets" id="ENSG00000080709"/>
<dbReference type="PharmGKB" id="PA30071"/>
<dbReference type="VEuPathDB" id="HostDB:ENSG00000080709"/>
<dbReference type="eggNOG" id="KOG3684">
    <property type="taxonomic scope" value="Eukaryota"/>
</dbReference>
<dbReference type="GeneTree" id="ENSGT00950000182904"/>
<dbReference type="HOGENOM" id="CLU_014617_0_1_1"/>
<dbReference type="InParanoid" id="Q9H2S1"/>
<dbReference type="OrthoDB" id="73653at2759"/>
<dbReference type="PAN-GO" id="Q9H2S1">
    <property type="GO annotations" value="6 GO annotations based on evolutionary models"/>
</dbReference>
<dbReference type="PhylomeDB" id="Q9H2S1"/>
<dbReference type="TreeFam" id="TF315015"/>
<dbReference type="PathwayCommons" id="Q9H2S1"/>
<dbReference type="Reactome" id="R-HSA-1296052">
    <property type="pathway name" value="Ca2+ activated K+ channels"/>
</dbReference>
<dbReference type="Reactome" id="R-HSA-9667769">
    <property type="pathway name" value="Acetylcholine inhibits contraction of outer hair cells"/>
</dbReference>
<dbReference type="SignaLink" id="Q9H2S1"/>
<dbReference type="SIGNOR" id="Q9H2S1"/>
<dbReference type="BioGRID-ORCS" id="3781">
    <property type="hits" value="10 hits in 1152 CRISPR screens"/>
</dbReference>
<dbReference type="ChiTaRS" id="KCNN2">
    <property type="organism name" value="human"/>
</dbReference>
<dbReference type="GeneWiki" id="KCNN2"/>
<dbReference type="GenomeRNAi" id="3781"/>
<dbReference type="Pharos" id="Q9H2S1">
    <property type="development level" value="Tchem"/>
</dbReference>
<dbReference type="PRO" id="PR:Q9H2S1"/>
<dbReference type="Proteomes" id="UP000005640">
    <property type="component" value="Chromosome 5"/>
</dbReference>
<dbReference type="RNAct" id="Q9H2S1">
    <property type="molecule type" value="protein"/>
</dbReference>
<dbReference type="Bgee" id="ENSG00000080709">
    <property type="expression patterns" value="Expressed in secondary oocyte and 150 other cell types or tissues"/>
</dbReference>
<dbReference type="ExpressionAtlas" id="Q9H2S1">
    <property type="expression patterns" value="baseline and differential"/>
</dbReference>
<dbReference type="GO" id="GO:0009986">
    <property type="term" value="C:cell surface"/>
    <property type="evidence" value="ECO:0000314"/>
    <property type="project" value="UniProtKB"/>
</dbReference>
<dbReference type="GO" id="GO:0043197">
    <property type="term" value="C:dendritic spine"/>
    <property type="evidence" value="ECO:0000318"/>
    <property type="project" value="GO_Central"/>
</dbReference>
<dbReference type="GO" id="GO:0016020">
    <property type="term" value="C:membrane"/>
    <property type="evidence" value="ECO:0000303"/>
    <property type="project" value="UniProtKB"/>
</dbReference>
<dbReference type="GO" id="GO:0043025">
    <property type="term" value="C:neuronal cell body"/>
    <property type="evidence" value="ECO:0000318"/>
    <property type="project" value="GO_Central"/>
</dbReference>
<dbReference type="GO" id="GO:0005886">
    <property type="term" value="C:plasma membrane"/>
    <property type="evidence" value="ECO:0000314"/>
    <property type="project" value="UniProtKB"/>
</dbReference>
<dbReference type="GO" id="GO:0030018">
    <property type="term" value="C:Z disc"/>
    <property type="evidence" value="ECO:0000250"/>
    <property type="project" value="BHF-UCL"/>
</dbReference>
<dbReference type="GO" id="GO:0051393">
    <property type="term" value="F:alpha-actinin binding"/>
    <property type="evidence" value="ECO:0000353"/>
    <property type="project" value="BHF-UCL"/>
</dbReference>
<dbReference type="GO" id="GO:0015269">
    <property type="term" value="F:calcium-activated potassium channel activity"/>
    <property type="evidence" value="ECO:0000314"/>
    <property type="project" value="BHF-UCL"/>
</dbReference>
<dbReference type="GO" id="GO:0005516">
    <property type="term" value="F:calmodulin binding"/>
    <property type="evidence" value="ECO:0000318"/>
    <property type="project" value="GO_Central"/>
</dbReference>
<dbReference type="GO" id="GO:0005242">
    <property type="term" value="F:inward rectifier potassium channel activity"/>
    <property type="evidence" value="ECO:0000314"/>
    <property type="project" value="UniProtKB"/>
</dbReference>
<dbReference type="GO" id="GO:0019904">
    <property type="term" value="F:protein domain specific binding"/>
    <property type="evidence" value="ECO:0000353"/>
    <property type="project" value="UniProtKB"/>
</dbReference>
<dbReference type="GO" id="GO:0042803">
    <property type="term" value="F:protein homodimerization activity"/>
    <property type="evidence" value="ECO:0000353"/>
    <property type="project" value="BHF-UCL"/>
</dbReference>
<dbReference type="GO" id="GO:0016286">
    <property type="term" value="F:small conductance calcium-activated potassium channel activity"/>
    <property type="evidence" value="ECO:0000314"/>
    <property type="project" value="UniProtKB"/>
</dbReference>
<dbReference type="GO" id="GO:0098914">
    <property type="term" value="P:membrane repolarization during atrial cardiac muscle cell action potential"/>
    <property type="evidence" value="ECO:0000250"/>
    <property type="project" value="BHF-UCL"/>
</dbReference>
<dbReference type="GO" id="GO:0071805">
    <property type="term" value="P:potassium ion transmembrane transport"/>
    <property type="evidence" value="ECO:0000314"/>
    <property type="project" value="UniProtKB"/>
</dbReference>
<dbReference type="GO" id="GO:0006813">
    <property type="term" value="P:potassium ion transport"/>
    <property type="evidence" value="ECO:0000304"/>
    <property type="project" value="UniProtKB"/>
</dbReference>
<dbReference type="GO" id="GO:1901379">
    <property type="term" value="P:regulation of potassium ion transmembrane transport"/>
    <property type="evidence" value="ECO:0000314"/>
    <property type="project" value="BHF-UCL"/>
</dbReference>
<dbReference type="FunFam" id="1.10.287.70:FF:000022">
    <property type="entry name" value="Small conductance calcium-activated potassium channel, isoform O"/>
    <property type="match status" value="1"/>
</dbReference>
<dbReference type="FunFam" id="1.10.287.70:FF:000027">
    <property type="entry name" value="Small conductance calcium-activated potassium channel, isoform O"/>
    <property type="match status" value="1"/>
</dbReference>
<dbReference type="Gene3D" id="1.10.287.70">
    <property type="match status" value="2"/>
</dbReference>
<dbReference type="InterPro" id="IPR004178">
    <property type="entry name" value="CaM-bd_dom"/>
</dbReference>
<dbReference type="InterPro" id="IPR036122">
    <property type="entry name" value="CaM-bd_dom_sf"/>
</dbReference>
<dbReference type="InterPro" id="IPR015449">
    <property type="entry name" value="K_chnl_Ca-activ_SK"/>
</dbReference>
<dbReference type="InterPro" id="IPR013099">
    <property type="entry name" value="K_chnl_dom"/>
</dbReference>
<dbReference type="PANTHER" id="PTHR10153">
    <property type="entry name" value="SMALL CONDUCTANCE CALCIUM-ACTIVATED POTASSIUM CHANNEL"/>
    <property type="match status" value="1"/>
</dbReference>
<dbReference type="Pfam" id="PF02888">
    <property type="entry name" value="CaMBD"/>
    <property type="match status" value="1"/>
</dbReference>
<dbReference type="Pfam" id="PF07885">
    <property type="entry name" value="Ion_trans_2"/>
    <property type="match status" value="1"/>
</dbReference>
<dbReference type="Pfam" id="PF03530">
    <property type="entry name" value="SK_channel"/>
    <property type="match status" value="1"/>
</dbReference>
<dbReference type="PRINTS" id="PR01451">
    <property type="entry name" value="SKCHANNEL"/>
</dbReference>
<dbReference type="SMART" id="SM01053">
    <property type="entry name" value="CaMBD"/>
    <property type="match status" value="1"/>
</dbReference>
<dbReference type="SUPFAM" id="SSF81327">
    <property type="entry name" value="Small-conductance potassium channel"/>
    <property type="match status" value="1"/>
</dbReference>
<dbReference type="SUPFAM" id="SSF81324">
    <property type="entry name" value="Voltage-gated potassium channels"/>
    <property type="match status" value="1"/>
</dbReference>
<proteinExistence type="evidence at protein level"/>
<sequence length="579" mass="63760">MSSCRYNGGVMRPLSNLSASRRNLHEMDSEAQPLQPPASVGGGGGASSPSAAAAAAAAVSSSAPEIVVSKPEHNNSNNLALYGTGGGGSTGGGGGGGGSGHGSSSGTKSSKKKNQNIGYKLGHRRALFEKRKRLSDYALIFGMFGIVVMVIETELSWGAYDKASLYSLALKCLISLSTIILLGLIIVYHAREIQLFMVDNGADDWRIAMTYERIFFICLEILVCAIHPIPGNYTFTWTARLAFSYAPSTTTADVDIILSIPMFLRLYLIARVMLLHSKLFTDASSRSIGALNKINFNTRFVMKTLMTICPGTVLLVFSISLWIIAAWTVRACERYHDQQDVTSNFLGAMWLISITFLSIGYGDMVPNTYCGKGVCLLTGIMGAGCTALVVAVVARKLELTKAEKHVHNFMMDTQLTKRVKNAAANVLRETWLIYKNTKLVKKIDHAKVRKHQRKFLQAIHQLRSVKMEQRKLNDQANTLVDLAKTQNIMYDMISDLNERSEDFEKRIVTLETKLETLIGSIHALPGLISQTIRQQQRDFIEAQMESYDKHVTYNAERSRSSSRRRRSSSTAPPTSSESS</sequence>
<evidence type="ECO:0000250" key="1"/>
<evidence type="ECO:0000250" key="2">
    <source>
        <dbReference type="UniProtKB" id="P58390"/>
    </source>
</evidence>
<evidence type="ECO:0000250" key="3">
    <source>
        <dbReference type="UniProtKB" id="P70604"/>
    </source>
</evidence>
<evidence type="ECO:0000255" key="4"/>
<evidence type="ECO:0000256" key="5">
    <source>
        <dbReference type="SAM" id="MobiDB-lite"/>
    </source>
</evidence>
<evidence type="ECO:0000269" key="6">
    <source>
    </source>
</evidence>
<evidence type="ECO:0000269" key="7">
    <source>
    </source>
</evidence>
<evidence type="ECO:0000269" key="8">
    <source>
    </source>
</evidence>
<evidence type="ECO:0000269" key="9">
    <source>
    </source>
</evidence>
<evidence type="ECO:0000269" key="10">
    <source>
    </source>
</evidence>
<evidence type="ECO:0000269" key="11">
    <source>
    </source>
</evidence>
<evidence type="ECO:0000303" key="12">
    <source>
    </source>
</evidence>
<evidence type="ECO:0000305" key="13"/>
<evidence type="ECO:0000312" key="14">
    <source>
        <dbReference type="HGNC" id="HGNC:6291"/>
    </source>
</evidence>
<evidence type="ECO:0007829" key="15">
    <source>
        <dbReference type="PDB" id="5V02"/>
    </source>
</evidence>
<evidence type="ECO:0007829" key="16">
    <source>
        <dbReference type="PDB" id="5WBX"/>
    </source>
</evidence>
<evidence type="ECO:0007829" key="17">
    <source>
        <dbReference type="PDB" id="6ALE"/>
    </source>
</evidence>